<name>CBID_THEVO</name>
<gene>
    <name evidence="1" type="primary">cbiD</name>
    <name type="ordered locus">TV0947</name>
    <name type="ORF">TVG0972668</name>
</gene>
<evidence type="ECO:0000255" key="1">
    <source>
        <dbReference type="HAMAP-Rule" id="MF_00787"/>
    </source>
</evidence>
<feature type="chain" id="PRO_0000141702" description="Cobalt-precorrin-5B C(1)-methyltransferase">
    <location>
        <begin position="1"/>
        <end position="378"/>
    </location>
</feature>
<reference key="1">
    <citation type="journal article" date="2000" name="Proc. Natl. Acad. Sci. U.S.A.">
        <title>Archaeal adaptation to higher temperatures revealed by genomic sequence of Thermoplasma volcanium.</title>
        <authorList>
            <person name="Kawashima T."/>
            <person name="Amano N."/>
            <person name="Koike H."/>
            <person name="Makino S."/>
            <person name="Higuchi S."/>
            <person name="Kawashima-Ohya Y."/>
            <person name="Watanabe K."/>
            <person name="Yamazaki M."/>
            <person name="Kanehori K."/>
            <person name="Kawamoto T."/>
            <person name="Nunoshiba T."/>
            <person name="Yamamoto Y."/>
            <person name="Aramaki H."/>
            <person name="Makino K."/>
            <person name="Suzuki M."/>
        </authorList>
    </citation>
    <scope>NUCLEOTIDE SEQUENCE [LARGE SCALE GENOMIC DNA]</scope>
    <source>
        <strain>ATCC 51530 / DSM 4299 / JCM 9571 / NBRC 15438 / GSS1</strain>
    </source>
</reference>
<protein>
    <recommendedName>
        <fullName evidence="1">Cobalt-precorrin-5B C(1)-methyltransferase</fullName>
        <ecNumber evidence="1">2.1.1.195</ecNumber>
    </recommendedName>
    <alternativeName>
        <fullName evidence="1">Cobalt-precorrin-6A synthase</fullName>
    </alternativeName>
</protein>
<accession>Q97A63</accession>
<comment type="function">
    <text evidence="1">Catalyzes the methylation of C-1 in cobalt-precorrin-5B to form cobalt-precorrin-6A.</text>
</comment>
<comment type="catalytic activity">
    <reaction evidence="1">
        <text>Co-precorrin-5B + S-adenosyl-L-methionine = Co-precorrin-6A + S-adenosyl-L-homocysteine</text>
        <dbReference type="Rhea" id="RHEA:26285"/>
        <dbReference type="ChEBI" id="CHEBI:57856"/>
        <dbReference type="ChEBI" id="CHEBI:59789"/>
        <dbReference type="ChEBI" id="CHEBI:60063"/>
        <dbReference type="ChEBI" id="CHEBI:60064"/>
        <dbReference type="EC" id="2.1.1.195"/>
    </reaction>
</comment>
<comment type="pathway">
    <text evidence="1">Cofactor biosynthesis; adenosylcobalamin biosynthesis; cob(II)yrinate a,c-diamide from sirohydrochlorin (anaerobic route): step 6/10.</text>
</comment>
<comment type="similarity">
    <text evidence="1">Belongs to the CbiD family.</text>
</comment>
<dbReference type="EC" id="2.1.1.195" evidence="1"/>
<dbReference type="EMBL" id="BA000011">
    <property type="protein sequence ID" value="BAB60089.1"/>
    <property type="molecule type" value="Genomic_DNA"/>
</dbReference>
<dbReference type="RefSeq" id="WP_052268470.1">
    <property type="nucleotide sequence ID" value="NC_002689.2"/>
</dbReference>
<dbReference type="SMR" id="Q97A63"/>
<dbReference type="STRING" id="273116.gene:9381739"/>
<dbReference type="PaxDb" id="273116-14325164"/>
<dbReference type="GeneID" id="1442026"/>
<dbReference type="KEGG" id="tvo:TVG0972668"/>
<dbReference type="eggNOG" id="arCOG04383">
    <property type="taxonomic scope" value="Archaea"/>
</dbReference>
<dbReference type="HOGENOM" id="CLU_041273_1_0_2"/>
<dbReference type="OrthoDB" id="57543at2157"/>
<dbReference type="PhylomeDB" id="Q97A63"/>
<dbReference type="UniPathway" id="UPA00148">
    <property type="reaction ID" value="UER00227"/>
</dbReference>
<dbReference type="Proteomes" id="UP000001017">
    <property type="component" value="Chromosome"/>
</dbReference>
<dbReference type="GO" id="GO:0043780">
    <property type="term" value="F:cobalt-precorrin-5B C1-methyltransferase activity"/>
    <property type="evidence" value="ECO:0007669"/>
    <property type="project" value="RHEA"/>
</dbReference>
<dbReference type="GO" id="GO:0019251">
    <property type="term" value="P:anaerobic cobalamin biosynthetic process"/>
    <property type="evidence" value="ECO:0007669"/>
    <property type="project" value="UniProtKB-UniRule"/>
</dbReference>
<dbReference type="GO" id="GO:0032259">
    <property type="term" value="P:methylation"/>
    <property type="evidence" value="ECO:0007669"/>
    <property type="project" value="UniProtKB-KW"/>
</dbReference>
<dbReference type="Gene3D" id="3.30.2110.10">
    <property type="entry name" value="CbiD-like"/>
    <property type="match status" value="1"/>
</dbReference>
<dbReference type="HAMAP" id="MF_00787">
    <property type="entry name" value="CbiD"/>
    <property type="match status" value="1"/>
</dbReference>
<dbReference type="InterPro" id="IPR002748">
    <property type="entry name" value="CbiD"/>
</dbReference>
<dbReference type="InterPro" id="IPR036074">
    <property type="entry name" value="CbiD_sf"/>
</dbReference>
<dbReference type="NCBIfam" id="TIGR00312">
    <property type="entry name" value="cbiD"/>
    <property type="match status" value="1"/>
</dbReference>
<dbReference type="PANTHER" id="PTHR35863">
    <property type="entry name" value="COBALT-PRECORRIN-5B C(1)-METHYLTRANSFERASE"/>
    <property type="match status" value="1"/>
</dbReference>
<dbReference type="PANTHER" id="PTHR35863:SF1">
    <property type="entry name" value="COBALT-PRECORRIN-5B C(1)-METHYLTRANSFERASE"/>
    <property type="match status" value="1"/>
</dbReference>
<dbReference type="Pfam" id="PF01888">
    <property type="entry name" value="CbiD"/>
    <property type="match status" value="1"/>
</dbReference>
<dbReference type="PIRSF" id="PIRSF026782">
    <property type="entry name" value="CbiD"/>
    <property type="match status" value="1"/>
</dbReference>
<dbReference type="SUPFAM" id="SSF111342">
    <property type="entry name" value="CbiD-like"/>
    <property type="match status" value="1"/>
</dbReference>
<organism>
    <name type="scientific">Thermoplasma volcanium (strain ATCC 51530 / DSM 4299 / JCM 9571 / NBRC 15438 / GSS1)</name>
    <dbReference type="NCBI Taxonomy" id="273116"/>
    <lineage>
        <taxon>Archaea</taxon>
        <taxon>Methanobacteriati</taxon>
        <taxon>Thermoplasmatota</taxon>
        <taxon>Thermoplasmata</taxon>
        <taxon>Thermoplasmatales</taxon>
        <taxon>Thermoplasmataceae</taxon>
        <taxon>Thermoplasma</taxon>
    </lineage>
</organism>
<keyword id="KW-0169">Cobalamin biosynthesis</keyword>
<keyword id="KW-0489">Methyltransferase</keyword>
<keyword id="KW-0949">S-adenosyl-L-methionine</keyword>
<keyword id="KW-0808">Transferase</keyword>
<proteinExistence type="inferred from homology"/>
<sequence length="378" mass="39916">MMYASDGSGVNPFQQYGITTGLTAAAAAKACTLTVLKGVQNRVVVPTPIGIRIEVKVVESVRIDESSGYASAEKFSGDNPDQLNGITIRCHCKVVKKQENGRSKITISGNAGIGVVEKDGLGIRPGEKAISQGARKMIEDAVREAAGGYDVELSISVPNGEEFAKLTMNEKVGVFGGISVLGTTGIEEPVSTEEYELHLKYIVAAGRCVSKIIVLCPGNTALKFAKKYFALPDKAFVLIGDKVGAAVSASIESAYDHVVIFGLPGKLVKIAAGIYNTHSKVADGRMETLAAVAAMYGISKGAVKRIMESSNTGEAISIIEQEGIVAEVLNTIASRISNRLKADFSRSVGFSVVIIDHDGKIIGSHLDGHIKEVLKYGK</sequence>